<keyword id="KW-0150">Chloroplast</keyword>
<keyword id="KW-0249">Electron transport</keyword>
<keyword id="KW-0349">Heme</keyword>
<keyword id="KW-0408">Iron</keyword>
<keyword id="KW-0472">Membrane</keyword>
<keyword id="KW-0479">Metal-binding</keyword>
<keyword id="KW-0602">Photosynthesis</keyword>
<keyword id="KW-0604">Photosystem II</keyword>
<keyword id="KW-0934">Plastid</keyword>
<keyword id="KW-0793">Thylakoid</keyword>
<keyword id="KW-0812">Transmembrane</keyword>
<keyword id="KW-1133">Transmembrane helix</keyword>
<keyword id="KW-0813">Transport</keyword>
<gene>
    <name evidence="1" type="primary">psbF</name>
</gene>
<sequence>MTIDRTYPIFTVRWLAVHGLAVPTVFFLGSISAMQFIQR</sequence>
<proteinExistence type="inferred from homology"/>
<accession>Q6EYW3</accession>
<comment type="function">
    <text evidence="1">This b-type cytochrome is tightly associated with the reaction center of photosystem II (PSII). PSII is a light-driven water:plastoquinone oxidoreductase that uses light energy to abstract electrons from H(2)O, generating O(2) and a proton gradient subsequently used for ATP formation. It consists of a core antenna complex that captures photons, and an electron transfer chain that converts photonic excitation into a charge separation.</text>
</comment>
<comment type="cofactor">
    <cofactor evidence="1">
        <name>heme b</name>
        <dbReference type="ChEBI" id="CHEBI:60344"/>
    </cofactor>
    <text evidence="1">With its partner (PsbE) binds heme. PSII binds additional chlorophylls, carotenoids and specific lipids.</text>
</comment>
<comment type="subunit">
    <text evidence="1">Heterodimer of an alpha subunit and a beta subunit. PSII is composed of 1 copy each of membrane proteins PsbA, PsbB, PsbC, PsbD, PsbE, PsbF, PsbH, PsbI, PsbJ, PsbK, PsbL, PsbM, PsbT, PsbX, PsbY, PsbZ, Psb30/Ycf12, at least 3 peripheral proteins of the oxygen-evolving complex and a large number of cofactors. It forms dimeric complexes.</text>
</comment>
<comment type="subcellular location">
    <subcellularLocation>
        <location evidence="1">Plastid</location>
        <location evidence="1">Chloroplast thylakoid membrane</location>
        <topology evidence="1">Single-pass membrane protein</topology>
    </subcellularLocation>
</comment>
<comment type="similarity">
    <text evidence="1">Belongs to the PsbE/PsbF family.</text>
</comment>
<name>PSBF_AGARO</name>
<dbReference type="EMBL" id="AF528865">
    <property type="protein sequence ID" value="AAQ09259.1"/>
    <property type="molecule type" value="Genomic_DNA"/>
</dbReference>
<dbReference type="SMR" id="Q6EYW3"/>
<dbReference type="GO" id="GO:0009535">
    <property type="term" value="C:chloroplast thylakoid membrane"/>
    <property type="evidence" value="ECO:0007669"/>
    <property type="project" value="UniProtKB-SubCell"/>
</dbReference>
<dbReference type="GO" id="GO:0009539">
    <property type="term" value="C:photosystem II reaction center"/>
    <property type="evidence" value="ECO:0007669"/>
    <property type="project" value="InterPro"/>
</dbReference>
<dbReference type="GO" id="GO:0009055">
    <property type="term" value="F:electron transfer activity"/>
    <property type="evidence" value="ECO:0007669"/>
    <property type="project" value="UniProtKB-UniRule"/>
</dbReference>
<dbReference type="GO" id="GO:0020037">
    <property type="term" value="F:heme binding"/>
    <property type="evidence" value="ECO:0007669"/>
    <property type="project" value="InterPro"/>
</dbReference>
<dbReference type="GO" id="GO:0005506">
    <property type="term" value="F:iron ion binding"/>
    <property type="evidence" value="ECO:0007669"/>
    <property type="project" value="UniProtKB-UniRule"/>
</dbReference>
<dbReference type="GO" id="GO:0009767">
    <property type="term" value="P:photosynthetic electron transport chain"/>
    <property type="evidence" value="ECO:0007669"/>
    <property type="project" value="InterPro"/>
</dbReference>
<dbReference type="HAMAP" id="MF_00643">
    <property type="entry name" value="PSII_PsbF"/>
    <property type="match status" value="1"/>
</dbReference>
<dbReference type="InterPro" id="IPR006241">
    <property type="entry name" value="PSII_cyt_b559_bsu"/>
</dbReference>
<dbReference type="InterPro" id="IPR006216">
    <property type="entry name" value="PSII_cyt_b559_CS"/>
</dbReference>
<dbReference type="InterPro" id="IPR013081">
    <property type="entry name" value="PSII_cyt_b559_N"/>
</dbReference>
<dbReference type="NCBIfam" id="TIGR01333">
    <property type="entry name" value="cyt_b559_beta"/>
    <property type="match status" value="1"/>
</dbReference>
<dbReference type="Pfam" id="PF00283">
    <property type="entry name" value="Cytochrom_B559"/>
    <property type="match status" value="1"/>
</dbReference>
<dbReference type="PIRSF" id="PIRSF000037">
    <property type="entry name" value="PsbF"/>
    <property type="match status" value="1"/>
</dbReference>
<dbReference type="SUPFAM" id="SSF161045">
    <property type="entry name" value="Cytochrome b559 subunits"/>
    <property type="match status" value="1"/>
</dbReference>
<dbReference type="PROSITE" id="PS00537">
    <property type="entry name" value="CYTOCHROME_B559"/>
    <property type="match status" value="1"/>
</dbReference>
<protein>
    <recommendedName>
        <fullName evidence="1">Cytochrome b559 subunit beta</fullName>
    </recommendedName>
    <alternativeName>
        <fullName evidence="1">PSII reaction center subunit VI</fullName>
    </alternativeName>
</protein>
<organism>
    <name type="scientific">Agathis robusta</name>
    <name type="common">Queensland kauri pine</name>
    <dbReference type="NCBI Taxonomy" id="60854"/>
    <lineage>
        <taxon>Eukaryota</taxon>
        <taxon>Viridiplantae</taxon>
        <taxon>Streptophyta</taxon>
        <taxon>Embryophyta</taxon>
        <taxon>Tracheophyta</taxon>
        <taxon>Spermatophyta</taxon>
        <taxon>Pinopsida</taxon>
        <taxon>Pinidae</taxon>
        <taxon>Conifers II</taxon>
        <taxon>Araucariales</taxon>
        <taxon>Araucariaceae</taxon>
        <taxon>Agathis</taxon>
    </lineage>
</organism>
<geneLocation type="chloroplast"/>
<feature type="chain" id="PRO_0000200350" description="Cytochrome b559 subunit beta">
    <location>
        <begin position="1"/>
        <end position="39"/>
    </location>
</feature>
<feature type="transmembrane region" description="Helical" evidence="1">
    <location>
        <begin position="14"/>
        <end position="30"/>
    </location>
</feature>
<feature type="binding site" description="axial binding residue" evidence="1">
    <location>
        <position position="18"/>
    </location>
    <ligand>
        <name>heme</name>
        <dbReference type="ChEBI" id="CHEBI:30413"/>
        <note>ligand shared with alpha subunit</note>
    </ligand>
    <ligandPart>
        <name>Fe</name>
        <dbReference type="ChEBI" id="CHEBI:18248"/>
    </ligandPart>
</feature>
<reference key="1">
    <citation type="submission" date="2002-07" db="EMBL/GenBank/DDBJ databases">
        <title>Parsing out signal and noise for seed-plant phylogenetic inference.</title>
        <authorList>
            <person name="Graham S.W."/>
            <person name="Rai H.S."/>
            <person name="Ikegami K."/>
            <person name="Reeves P.A."/>
            <person name="Olmstead R.G."/>
        </authorList>
    </citation>
    <scope>NUCLEOTIDE SEQUENCE [GENOMIC DNA]</scope>
</reference>
<evidence type="ECO:0000255" key="1">
    <source>
        <dbReference type="HAMAP-Rule" id="MF_00643"/>
    </source>
</evidence>